<proteinExistence type="inferred from homology"/>
<accession>Q026Q2</accession>
<gene>
    <name evidence="1" type="primary">lon</name>
    <name type="ordered locus">Acid_2027</name>
</gene>
<feature type="chain" id="PRO_0000396598" description="Lon protease">
    <location>
        <begin position="1"/>
        <end position="806"/>
    </location>
</feature>
<feature type="domain" description="Lon N-terminal" evidence="3">
    <location>
        <begin position="13"/>
        <end position="206"/>
    </location>
</feature>
<feature type="domain" description="Lon proteolytic" evidence="2">
    <location>
        <begin position="599"/>
        <end position="780"/>
    </location>
</feature>
<feature type="active site" evidence="1">
    <location>
        <position position="686"/>
    </location>
</feature>
<feature type="active site" evidence="1">
    <location>
        <position position="729"/>
    </location>
</feature>
<feature type="binding site" evidence="1">
    <location>
        <begin position="356"/>
        <end position="363"/>
    </location>
    <ligand>
        <name>ATP</name>
        <dbReference type="ChEBI" id="CHEBI:30616"/>
    </ligand>
</feature>
<reference key="1">
    <citation type="journal article" date="2009" name="Appl. Environ. Microbiol.">
        <title>Three genomes from the phylum Acidobacteria provide insight into the lifestyles of these microorganisms in soils.</title>
        <authorList>
            <person name="Ward N.L."/>
            <person name="Challacombe J.F."/>
            <person name="Janssen P.H."/>
            <person name="Henrissat B."/>
            <person name="Coutinho P.M."/>
            <person name="Wu M."/>
            <person name="Xie G."/>
            <person name="Haft D.H."/>
            <person name="Sait M."/>
            <person name="Badger J."/>
            <person name="Barabote R.D."/>
            <person name="Bradley B."/>
            <person name="Brettin T.S."/>
            <person name="Brinkac L.M."/>
            <person name="Bruce D."/>
            <person name="Creasy T."/>
            <person name="Daugherty S.C."/>
            <person name="Davidsen T.M."/>
            <person name="DeBoy R.T."/>
            <person name="Detter J.C."/>
            <person name="Dodson R.J."/>
            <person name="Durkin A.S."/>
            <person name="Ganapathy A."/>
            <person name="Gwinn-Giglio M."/>
            <person name="Han C.S."/>
            <person name="Khouri H."/>
            <person name="Kiss H."/>
            <person name="Kothari S.P."/>
            <person name="Madupu R."/>
            <person name="Nelson K.E."/>
            <person name="Nelson W.C."/>
            <person name="Paulsen I."/>
            <person name="Penn K."/>
            <person name="Ren Q."/>
            <person name="Rosovitz M.J."/>
            <person name="Selengut J.D."/>
            <person name="Shrivastava S."/>
            <person name="Sullivan S.A."/>
            <person name="Tapia R."/>
            <person name="Thompson L.S."/>
            <person name="Watkins K.L."/>
            <person name="Yang Q."/>
            <person name="Yu C."/>
            <person name="Zafar N."/>
            <person name="Zhou L."/>
            <person name="Kuske C.R."/>
        </authorList>
    </citation>
    <scope>NUCLEOTIDE SEQUENCE [LARGE SCALE GENOMIC DNA]</scope>
    <source>
        <strain>Ellin6076</strain>
    </source>
</reference>
<sequence length="806" mass="89835">MLTSKEKSDTKRLPMMPIRDVVIFPYMMTPFVVGRESSVRALEEAMAGDKKIFLATQHDASIDEPKPNEIYSVGTIVNIVQSLKLPDGNIKVLVEGVERAKVVSVADDEGFFRATVRTSGFKVETGPQLDALISRVTTLFEQYVKLSQNLNYETMVAAIRVDEPGKLADTVGANLQLTIEEKQELLEIFDPIDRLTRVAEMLDIEIEKLNVDRTIQGRVKRQMEKAQKEYYLNEKIKAIQKELGRGEKSEIDELKRRIEEAGMTADAQEKAMAELKRLENMPPMSAESTVSRNYLDWLLAVPWKKKSKEIRDLKFAEGVLEADHYGLEKIKERILEFLAVRRLVKNPKGSILCFVGPPGVGKTSLGMSIAKATGRKFVRMSLGGVRDEAEVRGHRRTYIGALPGQIIQMMKKAGTRNPVFMLDEVDKMSMDFRGDPSAALLEVLDPEQNFMFVDHYLDVEYDLSQVFFVATANVMHTIPAALQDRMEVIRLSGYTELEKMEIAKRFLVKKQIEATGLDSKQIDFQDDGINSLIQYYTREAGVRNLEREIGNVCRKVARQVVNAESGKDKKAPAKAVINGDKVPELLGPWKFRDLVVEKKNEIGAATGLAWTEVGGQLLTVECTLMEGKGKLTITGKLGEVMQESAQAAMSYIRSRAMSLGIPRDFYRNLDLHIHIPEGAIPKDGPSAGITLATTICSALTKIPVRGDLAMTGEITLRGKVLPIGGLKEKLMAAHRHGILEAIMPKENEKDLPDIPDAIKKTMKLHFVESMDEVLKIALEREIVALPIPGAELPVEAGKPAEETVAH</sequence>
<name>LON_SOLUE</name>
<keyword id="KW-0067">ATP-binding</keyword>
<keyword id="KW-0963">Cytoplasm</keyword>
<keyword id="KW-0378">Hydrolase</keyword>
<keyword id="KW-0547">Nucleotide-binding</keyword>
<keyword id="KW-0645">Protease</keyword>
<keyword id="KW-0720">Serine protease</keyword>
<keyword id="KW-0346">Stress response</keyword>
<protein>
    <recommendedName>
        <fullName evidence="1">Lon protease</fullName>
        <ecNumber evidence="1">3.4.21.53</ecNumber>
    </recommendedName>
    <alternativeName>
        <fullName evidence="1">ATP-dependent protease La</fullName>
    </alternativeName>
</protein>
<evidence type="ECO:0000255" key="1">
    <source>
        <dbReference type="HAMAP-Rule" id="MF_01973"/>
    </source>
</evidence>
<evidence type="ECO:0000255" key="2">
    <source>
        <dbReference type="PROSITE-ProRule" id="PRU01122"/>
    </source>
</evidence>
<evidence type="ECO:0000255" key="3">
    <source>
        <dbReference type="PROSITE-ProRule" id="PRU01123"/>
    </source>
</evidence>
<organism>
    <name type="scientific">Solibacter usitatus (strain Ellin6076)</name>
    <dbReference type="NCBI Taxonomy" id="234267"/>
    <lineage>
        <taxon>Bacteria</taxon>
        <taxon>Pseudomonadati</taxon>
        <taxon>Acidobacteriota</taxon>
        <taxon>Terriglobia</taxon>
        <taxon>Bryobacterales</taxon>
        <taxon>Solibacteraceae</taxon>
        <taxon>Candidatus Solibacter</taxon>
    </lineage>
</organism>
<comment type="function">
    <text evidence="1">ATP-dependent serine protease that mediates the selective degradation of mutant and abnormal proteins as well as certain short-lived regulatory proteins. Required for cellular homeostasis and for survival from DNA damage and developmental changes induced by stress. Degrades polypeptides processively to yield small peptide fragments that are 5 to 10 amino acids long. Binds to DNA in a double-stranded, site-specific manner.</text>
</comment>
<comment type="catalytic activity">
    <reaction evidence="1">
        <text>Hydrolysis of proteins in presence of ATP.</text>
        <dbReference type="EC" id="3.4.21.53"/>
    </reaction>
</comment>
<comment type="subunit">
    <text evidence="1">Homohexamer. Organized in a ring with a central cavity.</text>
</comment>
<comment type="subcellular location">
    <subcellularLocation>
        <location evidence="1">Cytoplasm</location>
    </subcellularLocation>
</comment>
<comment type="induction">
    <text evidence="1">By heat shock.</text>
</comment>
<comment type="similarity">
    <text evidence="1">Belongs to the peptidase S16 family.</text>
</comment>
<dbReference type="EC" id="3.4.21.53" evidence="1"/>
<dbReference type="EMBL" id="CP000473">
    <property type="protein sequence ID" value="ABJ83017.1"/>
    <property type="molecule type" value="Genomic_DNA"/>
</dbReference>
<dbReference type="SMR" id="Q026Q2"/>
<dbReference type="FunCoup" id="Q026Q2">
    <property type="interactions" value="634"/>
</dbReference>
<dbReference type="STRING" id="234267.Acid_2027"/>
<dbReference type="MEROPS" id="S16.001"/>
<dbReference type="KEGG" id="sus:Acid_2027"/>
<dbReference type="eggNOG" id="COG0466">
    <property type="taxonomic scope" value="Bacteria"/>
</dbReference>
<dbReference type="HOGENOM" id="CLU_004109_4_3_0"/>
<dbReference type="InParanoid" id="Q026Q2"/>
<dbReference type="OrthoDB" id="9803599at2"/>
<dbReference type="GO" id="GO:0005737">
    <property type="term" value="C:cytoplasm"/>
    <property type="evidence" value="ECO:0007669"/>
    <property type="project" value="UniProtKB-SubCell"/>
</dbReference>
<dbReference type="GO" id="GO:0005524">
    <property type="term" value="F:ATP binding"/>
    <property type="evidence" value="ECO:0007669"/>
    <property type="project" value="UniProtKB-UniRule"/>
</dbReference>
<dbReference type="GO" id="GO:0016887">
    <property type="term" value="F:ATP hydrolysis activity"/>
    <property type="evidence" value="ECO:0007669"/>
    <property type="project" value="UniProtKB-UniRule"/>
</dbReference>
<dbReference type="GO" id="GO:0004176">
    <property type="term" value="F:ATP-dependent peptidase activity"/>
    <property type="evidence" value="ECO:0007669"/>
    <property type="project" value="UniProtKB-UniRule"/>
</dbReference>
<dbReference type="GO" id="GO:0043565">
    <property type="term" value="F:sequence-specific DNA binding"/>
    <property type="evidence" value="ECO:0007669"/>
    <property type="project" value="UniProtKB-UniRule"/>
</dbReference>
<dbReference type="GO" id="GO:0004252">
    <property type="term" value="F:serine-type endopeptidase activity"/>
    <property type="evidence" value="ECO:0007669"/>
    <property type="project" value="UniProtKB-UniRule"/>
</dbReference>
<dbReference type="GO" id="GO:0034605">
    <property type="term" value="P:cellular response to heat"/>
    <property type="evidence" value="ECO:0007669"/>
    <property type="project" value="UniProtKB-UniRule"/>
</dbReference>
<dbReference type="GO" id="GO:0006515">
    <property type="term" value="P:protein quality control for misfolded or incompletely synthesized proteins"/>
    <property type="evidence" value="ECO:0007669"/>
    <property type="project" value="UniProtKB-UniRule"/>
</dbReference>
<dbReference type="CDD" id="cd19500">
    <property type="entry name" value="RecA-like_Lon"/>
    <property type="match status" value="1"/>
</dbReference>
<dbReference type="FunFam" id="1.20.5.5270:FF:000002">
    <property type="entry name" value="Lon protease homolog"/>
    <property type="match status" value="1"/>
</dbReference>
<dbReference type="FunFam" id="3.40.50.300:FF:000021">
    <property type="entry name" value="Lon protease homolog"/>
    <property type="match status" value="1"/>
</dbReference>
<dbReference type="Gene3D" id="1.10.8.60">
    <property type="match status" value="1"/>
</dbReference>
<dbReference type="Gene3D" id="1.20.5.5270">
    <property type="match status" value="1"/>
</dbReference>
<dbReference type="Gene3D" id="1.20.58.1480">
    <property type="match status" value="1"/>
</dbReference>
<dbReference type="Gene3D" id="3.30.230.10">
    <property type="match status" value="1"/>
</dbReference>
<dbReference type="Gene3D" id="2.30.130.40">
    <property type="entry name" value="LON domain-like"/>
    <property type="match status" value="1"/>
</dbReference>
<dbReference type="Gene3D" id="3.40.50.300">
    <property type="entry name" value="P-loop containing nucleotide triphosphate hydrolases"/>
    <property type="match status" value="1"/>
</dbReference>
<dbReference type="HAMAP" id="MF_01973">
    <property type="entry name" value="lon_bact"/>
    <property type="match status" value="1"/>
</dbReference>
<dbReference type="InterPro" id="IPR003593">
    <property type="entry name" value="AAA+_ATPase"/>
</dbReference>
<dbReference type="InterPro" id="IPR003959">
    <property type="entry name" value="ATPase_AAA_core"/>
</dbReference>
<dbReference type="InterPro" id="IPR027543">
    <property type="entry name" value="Lon_bac"/>
</dbReference>
<dbReference type="InterPro" id="IPR004815">
    <property type="entry name" value="Lon_bac/euk-typ"/>
</dbReference>
<dbReference type="InterPro" id="IPR054594">
    <property type="entry name" value="Lon_lid"/>
</dbReference>
<dbReference type="InterPro" id="IPR008269">
    <property type="entry name" value="Lon_proteolytic"/>
</dbReference>
<dbReference type="InterPro" id="IPR027065">
    <property type="entry name" value="Lon_Prtase"/>
</dbReference>
<dbReference type="InterPro" id="IPR003111">
    <property type="entry name" value="Lon_prtase_N"/>
</dbReference>
<dbReference type="InterPro" id="IPR046336">
    <property type="entry name" value="Lon_prtase_N_sf"/>
</dbReference>
<dbReference type="InterPro" id="IPR027417">
    <property type="entry name" value="P-loop_NTPase"/>
</dbReference>
<dbReference type="InterPro" id="IPR008268">
    <property type="entry name" value="Peptidase_S16_AS"/>
</dbReference>
<dbReference type="InterPro" id="IPR015947">
    <property type="entry name" value="PUA-like_sf"/>
</dbReference>
<dbReference type="InterPro" id="IPR020568">
    <property type="entry name" value="Ribosomal_Su5_D2-typ_SF"/>
</dbReference>
<dbReference type="InterPro" id="IPR014721">
    <property type="entry name" value="Ribsml_uS5_D2-typ_fold_subgr"/>
</dbReference>
<dbReference type="NCBIfam" id="TIGR00763">
    <property type="entry name" value="lon"/>
    <property type="match status" value="1"/>
</dbReference>
<dbReference type="NCBIfam" id="NF008053">
    <property type="entry name" value="PRK10787.1"/>
    <property type="match status" value="1"/>
</dbReference>
<dbReference type="PANTHER" id="PTHR10046">
    <property type="entry name" value="ATP DEPENDENT LON PROTEASE FAMILY MEMBER"/>
    <property type="match status" value="1"/>
</dbReference>
<dbReference type="Pfam" id="PF00004">
    <property type="entry name" value="AAA"/>
    <property type="match status" value="1"/>
</dbReference>
<dbReference type="Pfam" id="PF05362">
    <property type="entry name" value="Lon_C"/>
    <property type="match status" value="1"/>
</dbReference>
<dbReference type="Pfam" id="PF22667">
    <property type="entry name" value="Lon_lid"/>
    <property type="match status" value="1"/>
</dbReference>
<dbReference type="Pfam" id="PF02190">
    <property type="entry name" value="LON_substr_bdg"/>
    <property type="match status" value="1"/>
</dbReference>
<dbReference type="PIRSF" id="PIRSF001174">
    <property type="entry name" value="Lon_proteas"/>
    <property type="match status" value="1"/>
</dbReference>
<dbReference type="PRINTS" id="PR00830">
    <property type="entry name" value="ENDOLAPTASE"/>
</dbReference>
<dbReference type="SMART" id="SM00382">
    <property type="entry name" value="AAA"/>
    <property type="match status" value="1"/>
</dbReference>
<dbReference type="SMART" id="SM00464">
    <property type="entry name" value="LON"/>
    <property type="match status" value="1"/>
</dbReference>
<dbReference type="SUPFAM" id="SSF52540">
    <property type="entry name" value="P-loop containing nucleoside triphosphate hydrolases"/>
    <property type="match status" value="1"/>
</dbReference>
<dbReference type="SUPFAM" id="SSF88697">
    <property type="entry name" value="PUA domain-like"/>
    <property type="match status" value="1"/>
</dbReference>
<dbReference type="SUPFAM" id="SSF54211">
    <property type="entry name" value="Ribosomal protein S5 domain 2-like"/>
    <property type="match status" value="1"/>
</dbReference>
<dbReference type="PROSITE" id="PS51787">
    <property type="entry name" value="LON_N"/>
    <property type="match status" value="1"/>
</dbReference>
<dbReference type="PROSITE" id="PS51786">
    <property type="entry name" value="LON_PROTEOLYTIC"/>
    <property type="match status" value="1"/>
</dbReference>
<dbReference type="PROSITE" id="PS01046">
    <property type="entry name" value="LON_SER"/>
    <property type="match status" value="1"/>
</dbReference>